<name>DCUP_NITOC</name>
<comment type="function">
    <text evidence="1">Catalyzes the decarboxylation of four acetate groups of uroporphyrinogen-III to yield coproporphyrinogen-III.</text>
</comment>
<comment type="catalytic activity">
    <reaction evidence="1">
        <text>uroporphyrinogen III + 4 H(+) = coproporphyrinogen III + 4 CO2</text>
        <dbReference type="Rhea" id="RHEA:19865"/>
        <dbReference type="ChEBI" id="CHEBI:15378"/>
        <dbReference type="ChEBI" id="CHEBI:16526"/>
        <dbReference type="ChEBI" id="CHEBI:57308"/>
        <dbReference type="ChEBI" id="CHEBI:57309"/>
        <dbReference type="EC" id="4.1.1.37"/>
    </reaction>
</comment>
<comment type="pathway">
    <text evidence="1">Porphyrin-containing compound metabolism; protoporphyrin-IX biosynthesis; coproporphyrinogen-III from 5-aminolevulinate: step 4/4.</text>
</comment>
<comment type="subunit">
    <text evidence="1">Homodimer.</text>
</comment>
<comment type="subcellular location">
    <subcellularLocation>
        <location evidence="1">Cytoplasm</location>
    </subcellularLocation>
</comment>
<comment type="similarity">
    <text evidence="1">Belongs to the uroporphyrinogen decarboxylase family.</text>
</comment>
<accession>Q3J6U6</accession>
<evidence type="ECO:0000255" key="1">
    <source>
        <dbReference type="HAMAP-Rule" id="MF_00218"/>
    </source>
</evidence>
<dbReference type="EC" id="4.1.1.37" evidence="1"/>
<dbReference type="EMBL" id="CP000127">
    <property type="protein sequence ID" value="ABA59450.1"/>
    <property type="molecule type" value="Genomic_DNA"/>
</dbReference>
<dbReference type="RefSeq" id="WP_002812603.1">
    <property type="nucleotide sequence ID" value="NC_007484.1"/>
</dbReference>
<dbReference type="SMR" id="Q3J6U6"/>
<dbReference type="FunCoup" id="Q3J6U6">
    <property type="interactions" value="542"/>
</dbReference>
<dbReference type="STRING" id="323261.Noc_3008"/>
<dbReference type="KEGG" id="noc:Noc_3008"/>
<dbReference type="eggNOG" id="COG0407">
    <property type="taxonomic scope" value="Bacteria"/>
</dbReference>
<dbReference type="HOGENOM" id="CLU_040933_0_0_6"/>
<dbReference type="InParanoid" id="Q3J6U6"/>
<dbReference type="UniPathway" id="UPA00251">
    <property type="reaction ID" value="UER00321"/>
</dbReference>
<dbReference type="Proteomes" id="UP000006838">
    <property type="component" value="Chromosome"/>
</dbReference>
<dbReference type="GO" id="GO:0005829">
    <property type="term" value="C:cytosol"/>
    <property type="evidence" value="ECO:0007669"/>
    <property type="project" value="TreeGrafter"/>
</dbReference>
<dbReference type="GO" id="GO:0004853">
    <property type="term" value="F:uroporphyrinogen decarboxylase activity"/>
    <property type="evidence" value="ECO:0007669"/>
    <property type="project" value="UniProtKB-UniRule"/>
</dbReference>
<dbReference type="GO" id="GO:0019353">
    <property type="term" value="P:protoporphyrinogen IX biosynthetic process from glutamate"/>
    <property type="evidence" value="ECO:0007669"/>
    <property type="project" value="TreeGrafter"/>
</dbReference>
<dbReference type="CDD" id="cd00717">
    <property type="entry name" value="URO-D"/>
    <property type="match status" value="1"/>
</dbReference>
<dbReference type="FunFam" id="3.20.20.210:FF:000001">
    <property type="entry name" value="Uroporphyrinogen decarboxylase"/>
    <property type="match status" value="1"/>
</dbReference>
<dbReference type="Gene3D" id="3.20.20.210">
    <property type="match status" value="1"/>
</dbReference>
<dbReference type="HAMAP" id="MF_00218">
    <property type="entry name" value="URO_D"/>
    <property type="match status" value="1"/>
</dbReference>
<dbReference type="InterPro" id="IPR038071">
    <property type="entry name" value="UROD/MetE-like_sf"/>
</dbReference>
<dbReference type="InterPro" id="IPR006361">
    <property type="entry name" value="Uroporphyrinogen_deCO2ase_HemE"/>
</dbReference>
<dbReference type="InterPro" id="IPR000257">
    <property type="entry name" value="Uroporphyrinogen_deCOase"/>
</dbReference>
<dbReference type="NCBIfam" id="TIGR01464">
    <property type="entry name" value="hemE"/>
    <property type="match status" value="1"/>
</dbReference>
<dbReference type="PANTHER" id="PTHR21091">
    <property type="entry name" value="METHYLTETRAHYDROFOLATE:HOMOCYSTEINE METHYLTRANSFERASE RELATED"/>
    <property type="match status" value="1"/>
</dbReference>
<dbReference type="PANTHER" id="PTHR21091:SF169">
    <property type="entry name" value="UROPORPHYRINOGEN DECARBOXYLASE"/>
    <property type="match status" value="1"/>
</dbReference>
<dbReference type="Pfam" id="PF01208">
    <property type="entry name" value="URO-D"/>
    <property type="match status" value="1"/>
</dbReference>
<dbReference type="SUPFAM" id="SSF51726">
    <property type="entry name" value="UROD/MetE-like"/>
    <property type="match status" value="1"/>
</dbReference>
<dbReference type="PROSITE" id="PS00906">
    <property type="entry name" value="UROD_1"/>
    <property type="match status" value="1"/>
</dbReference>
<dbReference type="PROSITE" id="PS00907">
    <property type="entry name" value="UROD_2"/>
    <property type="match status" value="1"/>
</dbReference>
<gene>
    <name evidence="1" type="primary">hemE</name>
    <name type="ordered locus">Noc_3008</name>
</gene>
<feature type="chain" id="PRO_1000023931" description="Uroporphyrinogen decarboxylase">
    <location>
        <begin position="1"/>
        <end position="357"/>
    </location>
</feature>
<feature type="binding site" evidence="1">
    <location>
        <begin position="27"/>
        <end position="31"/>
    </location>
    <ligand>
        <name>substrate</name>
    </ligand>
</feature>
<feature type="binding site" evidence="1">
    <location>
        <position position="77"/>
    </location>
    <ligand>
        <name>substrate</name>
    </ligand>
</feature>
<feature type="binding site" evidence="1">
    <location>
        <position position="154"/>
    </location>
    <ligand>
        <name>substrate</name>
    </ligand>
</feature>
<feature type="binding site" evidence="1">
    <location>
        <position position="209"/>
    </location>
    <ligand>
        <name>substrate</name>
    </ligand>
</feature>
<feature type="binding site" evidence="1">
    <location>
        <position position="327"/>
    </location>
    <ligand>
        <name>substrate</name>
    </ligand>
</feature>
<feature type="site" description="Transition state stabilizer" evidence="1">
    <location>
        <position position="77"/>
    </location>
</feature>
<organism>
    <name type="scientific">Nitrosococcus oceani (strain ATCC 19707 / BCRC 17464 / JCM 30415 / NCIMB 11848 / C-107)</name>
    <dbReference type="NCBI Taxonomy" id="323261"/>
    <lineage>
        <taxon>Bacteria</taxon>
        <taxon>Pseudomonadati</taxon>
        <taxon>Pseudomonadota</taxon>
        <taxon>Gammaproteobacteria</taxon>
        <taxon>Chromatiales</taxon>
        <taxon>Chromatiaceae</taxon>
        <taxon>Nitrosococcus</taxon>
    </lineage>
</organism>
<keyword id="KW-0963">Cytoplasm</keyword>
<keyword id="KW-0210">Decarboxylase</keyword>
<keyword id="KW-0456">Lyase</keyword>
<keyword id="KW-0627">Porphyrin biosynthesis</keyword>
<keyword id="KW-1185">Reference proteome</keyword>
<protein>
    <recommendedName>
        <fullName evidence="1">Uroporphyrinogen decarboxylase</fullName>
        <shortName evidence="1">UPD</shortName>
        <shortName evidence="1">URO-D</shortName>
        <ecNumber evidence="1">4.1.1.37</ecNumber>
    </recommendedName>
</protein>
<sequence length="357" mass="39579">MAELKNDRFLRALLRQPVDRTPIWIMRQAGRYLPEYREVRAKAGDFLTLCTTPELACEVTLQPLRRFDLDAAIIFSDILTIPHAMGLGLYFSKGEGPRFERPVRTKNQVSALGVPDPESDLSYVMEALRLTRRELDGRVPLIGFSGSPWTLACYMVEGGSSKDFALIKGLMFEHPQVMHHLLEILAQAVTVYLNAQIAAGAQAVMLFDTWGGALSHRDYRDFSLSYMARIVEGVVRENEGRQVPVILFTKGGGLWLETMAGTGCDALGVDWTVDLAKARMQVGKQVALQGNMDPCVLYASSERVRQEASEIIKAYGAGSGHVFNLGHGIHPTVMPEKVAALVDAVHELSVPYHTYEE</sequence>
<proteinExistence type="inferred from homology"/>
<reference key="1">
    <citation type="journal article" date="2006" name="Appl. Environ. Microbiol.">
        <title>Complete genome sequence of the marine, chemolithoautotrophic, ammonia-oxidizing bacterium Nitrosococcus oceani ATCC 19707.</title>
        <authorList>
            <person name="Klotz M.G."/>
            <person name="Arp D.J."/>
            <person name="Chain P.S.G."/>
            <person name="El-Sheikh A.F."/>
            <person name="Hauser L.J."/>
            <person name="Hommes N.G."/>
            <person name="Larimer F.W."/>
            <person name="Malfatti S.A."/>
            <person name="Norton J.M."/>
            <person name="Poret-Peterson A.T."/>
            <person name="Vergez L.M."/>
            <person name="Ward B.B."/>
        </authorList>
    </citation>
    <scope>NUCLEOTIDE SEQUENCE [LARGE SCALE GENOMIC DNA]</scope>
    <source>
        <strain>ATCC 19707 / BCRC 17464 / JCM 30415 / NCIMB 11848 / C-107</strain>
    </source>
</reference>